<protein>
    <recommendedName>
        <fullName evidence="1">Large ribosomal subunit protein uL22</fullName>
    </recommendedName>
    <alternativeName>
        <fullName evidence="2">50S ribosomal protein L22</fullName>
    </alternativeName>
</protein>
<proteinExistence type="inferred from homology"/>
<accession>Q2A5G5</accession>
<feature type="chain" id="PRO_0000243149" description="Large ribosomal subunit protein uL22">
    <location>
        <begin position="1"/>
        <end position="111"/>
    </location>
</feature>
<evidence type="ECO:0000255" key="1">
    <source>
        <dbReference type="HAMAP-Rule" id="MF_01331"/>
    </source>
</evidence>
<evidence type="ECO:0000305" key="2"/>
<name>RL22_FRATH</name>
<sequence length="111" mass="12201">MEVQAKLKFARISAQKCRLVADQIRGLPVEQAINLLTFSNKKAAVLIKGVLNSAVANAEHNDGMDVDSLVVSTIFVDEGPTMKRFEARAKGRGNRILKRTSHITVKVAEKK</sequence>
<gene>
    <name evidence="1" type="primary">rplV</name>
    <name type="ordered locus">FTL_0241</name>
</gene>
<reference key="1">
    <citation type="submission" date="2006-03" db="EMBL/GenBank/DDBJ databases">
        <title>Complete genome sequence of Francisella tularensis LVS (Live Vaccine Strain).</title>
        <authorList>
            <person name="Chain P."/>
            <person name="Larimer F."/>
            <person name="Land M."/>
            <person name="Stilwagen S."/>
            <person name="Larsson P."/>
            <person name="Bearden S."/>
            <person name="Chu M."/>
            <person name="Oyston P."/>
            <person name="Forsman M."/>
            <person name="Andersson S."/>
            <person name="Lindler L."/>
            <person name="Titball R."/>
            <person name="Garcia E."/>
        </authorList>
    </citation>
    <scope>NUCLEOTIDE SEQUENCE [LARGE SCALE GENOMIC DNA]</scope>
    <source>
        <strain>LVS</strain>
    </source>
</reference>
<organism>
    <name type="scientific">Francisella tularensis subsp. holarctica (strain LVS)</name>
    <dbReference type="NCBI Taxonomy" id="376619"/>
    <lineage>
        <taxon>Bacteria</taxon>
        <taxon>Pseudomonadati</taxon>
        <taxon>Pseudomonadota</taxon>
        <taxon>Gammaproteobacteria</taxon>
        <taxon>Thiotrichales</taxon>
        <taxon>Francisellaceae</taxon>
        <taxon>Francisella</taxon>
    </lineage>
</organism>
<dbReference type="EMBL" id="AM233362">
    <property type="protein sequence ID" value="CAJ78682.1"/>
    <property type="molecule type" value="Genomic_DNA"/>
</dbReference>
<dbReference type="RefSeq" id="WP_003027193.1">
    <property type="nucleotide sequence ID" value="NZ_CP009694.1"/>
</dbReference>
<dbReference type="SMR" id="Q2A5G5"/>
<dbReference type="GeneID" id="75264256"/>
<dbReference type="KEGG" id="ftl:FTL_0241"/>
<dbReference type="Proteomes" id="UP000001944">
    <property type="component" value="Chromosome"/>
</dbReference>
<dbReference type="GO" id="GO:0022625">
    <property type="term" value="C:cytosolic large ribosomal subunit"/>
    <property type="evidence" value="ECO:0007669"/>
    <property type="project" value="TreeGrafter"/>
</dbReference>
<dbReference type="GO" id="GO:0019843">
    <property type="term" value="F:rRNA binding"/>
    <property type="evidence" value="ECO:0007669"/>
    <property type="project" value="UniProtKB-UniRule"/>
</dbReference>
<dbReference type="GO" id="GO:0003735">
    <property type="term" value="F:structural constituent of ribosome"/>
    <property type="evidence" value="ECO:0007669"/>
    <property type="project" value="InterPro"/>
</dbReference>
<dbReference type="GO" id="GO:0006412">
    <property type="term" value="P:translation"/>
    <property type="evidence" value="ECO:0007669"/>
    <property type="project" value="UniProtKB-UniRule"/>
</dbReference>
<dbReference type="CDD" id="cd00336">
    <property type="entry name" value="Ribosomal_L22"/>
    <property type="match status" value="1"/>
</dbReference>
<dbReference type="FunFam" id="3.90.470.10:FF:000001">
    <property type="entry name" value="50S ribosomal protein L22"/>
    <property type="match status" value="1"/>
</dbReference>
<dbReference type="Gene3D" id="3.90.470.10">
    <property type="entry name" value="Ribosomal protein L22/L17"/>
    <property type="match status" value="1"/>
</dbReference>
<dbReference type="HAMAP" id="MF_01331_B">
    <property type="entry name" value="Ribosomal_uL22_B"/>
    <property type="match status" value="1"/>
</dbReference>
<dbReference type="InterPro" id="IPR001063">
    <property type="entry name" value="Ribosomal_uL22"/>
</dbReference>
<dbReference type="InterPro" id="IPR005727">
    <property type="entry name" value="Ribosomal_uL22_bac/chlpt-type"/>
</dbReference>
<dbReference type="InterPro" id="IPR047867">
    <property type="entry name" value="Ribosomal_uL22_bac/org-type"/>
</dbReference>
<dbReference type="InterPro" id="IPR018260">
    <property type="entry name" value="Ribosomal_uL22_CS"/>
</dbReference>
<dbReference type="InterPro" id="IPR036394">
    <property type="entry name" value="Ribosomal_uL22_sf"/>
</dbReference>
<dbReference type="NCBIfam" id="TIGR01044">
    <property type="entry name" value="rplV_bact"/>
    <property type="match status" value="1"/>
</dbReference>
<dbReference type="PANTHER" id="PTHR13501">
    <property type="entry name" value="CHLOROPLAST 50S RIBOSOMAL PROTEIN L22-RELATED"/>
    <property type="match status" value="1"/>
</dbReference>
<dbReference type="PANTHER" id="PTHR13501:SF8">
    <property type="entry name" value="LARGE RIBOSOMAL SUBUNIT PROTEIN UL22M"/>
    <property type="match status" value="1"/>
</dbReference>
<dbReference type="Pfam" id="PF00237">
    <property type="entry name" value="Ribosomal_L22"/>
    <property type="match status" value="1"/>
</dbReference>
<dbReference type="SUPFAM" id="SSF54843">
    <property type="entry name" value="Ribosomal protein L22"/>
    <property type="match status" value="1"/>
</dbReference>
<dbReference type="PROSITE" id="PS00464">
    <property type="entry name" value="RIBOSOMAL_L22"/>
    <property type="match status" value="1"/>
</dbReference>
<comment type="function">
    <text evidence="1">This protein binds specifically to 23S rRNA; its binding is stimulated by other ribosomal proteins, e.g. L4, L17, and L20. It is important during the early stages of 50S assembly. It makes multiple contacts with different domains of the 23S rRNA in the assembled 50S subunit and ribosome (By similarity).</text>
</comment>
<comment type="function">
    <text evidence="1">The globular domain of the protein is located near the polypeptide exit tunnel on the outside of the subunit, while an extended beta-hairpin is found that lines the wall of the exit tunnel in the center of the 70S ribosome.</text>
</comment>
<comment type="subunit">
    <text evidence="1">Part of the 50S ribosomal subunit.</text>
</comment>
<comment type="similarity">
    <text evidence="1">Belongs to the universal ribosomal protein uL22 family.</text>
</comment>
<keyword id="KW-1185">Reference proteome</keyword>
<keyword id="KW-0687">Ribonucleoprotein</keyword>
<keyword id="KW-0689">Ribosomal protein</keyword>
<keyword id="KW-0694">RNA-binding</keyword>
<keyword id="KW-0699">rRNA-binding</keyword>